<keyword id="KW-0010">Activator</keyword>
<keyword id="KW-0067">ATP-binding</keyword>
<keyword id="KW-0963">Cytoplasm</keyword>
<keyword id="KW-0206">Cytoskeleton</keyword>
<keyword id="KW-1015">Disulfide bond</keyword>
<keyword id="KW-0256">Endoplasmic reticulum</keyword>
<keyword id="KW-0333">Golgi apparatus</keyword>
<keyword id="KW-0378">Hydrolase</keyword>
<keyword id="KW-0391">Immunity</keyword>
<keyword id="KW-1271">Inflammasome</keyword>
<keyword id="KW-0395">Inflammatory response</keyword>
<keyword id="KW-0399">Innate immunity</keyword>
<keyword id="KW-1017">Isopeptide bond</keyword>
<keyword id="KW-0433">Leucine-rich repeat</keyword>
<keyword id="KW-0449">Lipoprotein</keyword>
<keyword id="KW-0472">Membrane</keyword>
<keyword id="KW-0496">Mitochondrion</keyword>
<keyword id="KW-0547">Nucleotide-binding</keyword>
<keyword id="KW-0539">Nucleus</keyword>
<keyword id="KW-0564">Palmitate</keyword>
<keyword id="KW-0597">Phosphoprotein</keyword>
<keyword id="KW-1185">Reference proteome</keyword>
<keyword id="KW-0677">Repeat</keyword>
<keyword id="KW-0964">Secreted</keyword>
<keyword id="KW-0804">Transcription</keyword>
<keyword id="KW-0805">Transcription regulation</keyword>
<keyword id="KW-0832">Ubl conjugation</keyword>
<sequence length="1035" mass="118540">MKMMSVRCKLAQYLEDLEDVDLKKFKMHLEDYPPEKGCVPIPRGQMEKADHLDLATLMIDFNGEEKAWGMAVWIFAAINRRDLWEKAKKDQPEWNDACTSNLSMVCQEDSLEEEWIGLLGYLSRISICKKKKDYCKIYRRHVRSRFYSIKDRNARLGESVDLNRRYTQLQLVKEHPSKQEREHELLTIGRTKMWDRPMSSLKLELLFEPEDEHLEPVHTVVFQGAAGIGKTILARKIMLDWALGKLFKDKFDYLFFIHCREVSLRAPKSLADLIISCWPDPNPPVCKILCKPSRILFLMDGFDELQGAFDEHIEEVCTDWQKAVRGDILLSSLIRKKLLPKASLLITTRPVALEKLQHLLDHPRHVEILGFSEAKRKEYFFKYFSNELQAREAFRLIQENEILFTMCFIPLVCWIVCTGLKQQMETGKSLAQTSKTTTAVYVFFLSSLLQSRGGIEEHLFSAYLPGLCSLAADGIWNQKILFEECDLRKHGLQKTDVSAFLRMNVFQKEVDCERFYSFSHMTFQEFFAAMYYLLEEEEEGVTVRKGPEGCSDLLNRDVKVLLENYGKFEKGYLIFVVRFLFGLVNQERTSYLEKKLSCKISQQVRLELLKWIEVKAKAKKLQRQPSQLELFYCLYEMQEEDFVQSAMGHFPKIEINLSTRMDHVVSSFCIKNCHRVKTLSLGFLHNSPKEEEEEKRGSQPLDQVQCVFPDPHVACSSRLVNCCLTSSFCRGLFSSLSTNQSLTELDLSDNTLGDPGMRVLCEALQHPGCNIQRLWLGRCGLTHQCCFNISSVLSSSQKLVELDLSDNALGDFGVRLLCVGLKHLLCNLQKLWLVSCCLTSACCQDLALVLSSNHSLTRLYIGENALGDSGVQVLCEKMKDPQCNLQKLGLVNSGLTSLCCSALTSVLKTNQNLTHLYLRSNALGDMGLKLLCEGLLHPDCKLQMLELDNCSLTSHSCWDLSTILTHNQSLRKLNLSNNDLGDLCVVTLCEVLKQQGCLLQSLQLGEMYLNCETKRTLEALQEEKPELTVVFEISW</sequence>
<organism>
    <name type="scientific">Rattus norvegicus</name>
    <name type="common">Rat</name>
    <dbReference type="NCBI Taxonomy" id="10116"/>
    <lineage>
        <taxon>Eukaryota</taxon>
        <taxon>Metazoa</taxon>
        <taxon>Chordata</taxon>
        <taxon>Craniata</taxon>
        <taxon>Vertebrata</taxon>
        <taxon>Euteleostomi</taxon>
        <taxon>Mammalia</taxon>
        <taxon>Eutheria</taxon>
        <taxon>Euarchontoglires</taxon>
        <taxon>Glires</taxon>
        <taxon>Rodentia</taxon>
        <taxon>Myomorpha</taxon>
        <taxon>Muroidea</taxon>
        <taxon>Muridae</taxon>
        <taxon>Murinae</taxon>
        <taxon>Rattus</taxon>
    </lineage>
</organism>
<accession>D4A523</accession>
<gene>
    <name evidence="7" type="primary">Nlrp3</name>
</gene>
<reference key="1">
    <citation type="journal article" date="2004" name="Nature">
        <title>Genome sequence of the Brown Norway rat yields insights into mammalian evolution.</title>
        <authorList>
            <person name="Gibbs R.A."/>
            <person name="Weinstock G.M."/>
            <person name="Metzker M.L."/>
            <person name="Muzny D.M."/>
            <person name="Sodergren E.J."/>
            <person name="Scherer S."/>
            <person name="Scott G."/>
            <person name="Steffen D."/>
            <person name="Worley K.C."/>
            <person name="Burch P.E."/>
            <person name="Okwuonu G."/>
            <person name="Hines S."/>
            <person name="Lewis L."/>
            <person name="Deramo C."/>
            <person name="Delgado O."/>
            <person name="Dugan-Rocha S."/>
            <person name="Miner G."/>
            <person name="Morgan M."/>
            <person name="Hawes A."/>
            <person name="Gill R."/>
            <person name="Holt R.A."/>
            <person name="Adams M.D."/>
            <person name="Amanatides P.G."/>
            <person name="Baden-Tillson H."/>
            <person name="Barnstead M."/>
            <person name="Chin S."/>
            <person name="Evans C.A."/>
            <person name="Ferriera S."/>
            <person name="Fosler C."/>
            <person name="Glodek A."/>
            <person name="Gu Z."/>
            <person name="Jennings D."/>
            <person name="Kraft C.L."/>
            <person name="Nguyen T."/>
            <person name="Pfannkoch C.M."/>
            <person name="Sitter C."/>
            <person name="Sutton G.G."/>
            <person name="Venter J.C."/>
            <person name="Woodage T."/>
            <person name="Smith D."/>
            <person name="Lee H.-M."/>
            <person name="Gustafson E."/>
            <person name="Cahill P."/>
            <person name="Kana A."/>
            <person name="Doucette-Stamm L."/>
            <person name="Weinstock K."/>
            <person name="Fechtel K."/>
            <person name="Weiss R.B."/>
            <person name="Dunn D.M."/>
            <person name="Green E.D."/>
            <person name="Blakesley R.W."/>
            <person name="Bouffard G.G."/>
            <person name="De Jong P.J."/>
            <person name="Osoegawa K."/>
            <person name="Zhu B."/>
            <person name="Marra M."/>
            <person name="Schein J."/>
            <person name="Bosdet I."/>
            <person name="Fjell C."/>
            <person name="Jones S."/>
            <person name="Krzywinski M."/>
            <person name="Mathewson C."/>
            <person name="Siddiqui A."/>
            <person name="Wye N."/>
            <person name="McPherson J."/>
            <person name="Zhao S."/>
            <person name="Fraser C.M."/>
            <person name="Shetty J."/>
            <person name="Shatsman S."/>
            <person name="Geer K."/>
            <person name="Chen Y."/>
            <person name="Abramzon S."/>
            <person name="Nierman W.C."/>
            <person name="Havlak P.H."/>
            <person name="Chen R."/>
            <person name="Durbin K.J."/>
            <person name="Egan A."/>
            <person name="Ren Y."/>
            <person name="Song X.-Z."/>
            <person name="Li B."/>
            <person name="Liu Y."/>
            <person name="Qin X."/>
            <person name="Cawley S."/>
            <person name="Cooney A.J."/>
            <person name="D'Souza L.M."/>
            <person name="Martin K."/>
            <person name="Wu J.Q."/>
            <person name="Gonzalez-Garay M.L."/>
            <person name="Jackson A.R."/>
            <person name="Kalafus K.J."/>
            <person name="McLeod M.P."/>
            <person name="Milosavljevic A."/>
            <person name="Virk D."/>
            <person name="Volkov A."/>
            <person name="Wheeler D.A."/>
            <person name="Zhang Z."/>
            <person name="Bailey J.A."/>
            <person name="Eichler E.E."/>
            <person name="Tuzun E."/>
            <person name="Birney E."/>
            <person name="Mongin E."/>
            <person name="Ureta-Vidal A."/>
            <person name="Woodwark C."/>
            <person name="Zdobnov E."/>
            <person name="Bork P."/>
            <person name="Suyama M."/>
            <person name="Torrents D."/>
            <person name="Alexandersson M."/>
            <person name="Trask B.J."/>
            <person name="Young J.M."/>
            <person name="Huang H."/>
            <person name="Wang H."/>
            <person name="Xing H."/>
            <person name="Daniels S."/>
            <person name="Gietzen D."/>
            <person name="Schmidt J."/>
            <person name="Stevens K."/>
            <person name="Vitt U."/>
            <person name="Wingrove J."/>
            <person name="Camara F."/>
            <person name="Mar Alba M."/>
            <person name="Abril J.F."/>
            <person name="Guigo R."/>
            <person name="Smit A."/>
            <person name="Dubchak I."/>
            <person name="Rubin E.M."/>
            <person name="Couronne O."/>
            <person name="Poliakov A."/>
            <person name="Huebner N."/>
            <person name="Ganten D."/>
            <person name="Goesele C."/>
            <person name="Hummel O."/>
            <person name="Kreitler T."/>
            <person name="Lee Y.-A."/>
            <person name="Monti J."/>
            <person name="Schulz H."/>
            <person name="Zimdahl H."/>
            <person name="Himmelbauer H."/>
            <person name="Lehrach H."/>
            <person name="Jacob H.J."/>
            <person name="Bromberg S."/>
            <person name="Gullings-Handley J."/>
            <person name="Jensen-Seaman M.I."/>
            <person name="Kwitek A.E."/>
            <person name="Lazar J."/>
            <person name="Pasko D."/>
            <person name="Tonellato P.J."/>
            <person name="Twigger S."/>
            <person name="Ponting C.P."/>
            <person name="Duarte J.M."/>
            <person name="Rice S."/>
            <person name="Goodstadt L."/>
            <person name="Beatson S.A."/>
            <person name="Emes R.D."/>
            <person name="Winter E.E."/>
            <person name="Webber C."/>
            <person name="Brandt P."/>
            <person name="Nyakatura G."/>
            <person name="Adetobi M."/>
            <person name="Chiaromonte F."/>
            <person name="Elnitski L."/>
            <person name="Eswara P."/>
            <person name="Hardison R.C."/>
            <person name="Hou M."/>
            <person name="Kolbe D."/>
            <person name="Makova K."/>
            <person name="Miller W."/>
            <person name="Nekrutenko A."/>
            <person name="Riemer C."/>
            <person name="Schwartz S."/>
            <person name="Taylor J."/>
            <person name="Yang S."/>
            <person name="Zhang Y."/>
            <person name="Lindpaintner K."/>
            <person name="Andrews T.D."/>
            <person name="Caccamo M."/>
            <person name="Clamp M."/>
            <person name="Clarke L."/>
            <person name="Curwen V."/>
            <person name="Durbin R.M."/>
            <person name="Eyras E."/>
            <person name="Searle S.M."/>
            <person name="Cooper G.M."/>
            <person name="Batzoglou S."/>
            <person name="Brudno M."/>
            <person name="Sidow A."/>
            <person name="Stone E.A."/>
            <person name="Payseur B.A."/>
            <person name="Bourque G."/>
            <person name="Lopez-Otin C."/>
            <person name="Puente X.S."/>
            <person name="Chakrabarti K."/>
            <person name="Chatterji S."/>
            <person name="Dewey C."/>
            <person name="Pachter L."/>
            <person name="Bray N."/>
            <person name="Yap V.B."/>
            <person name="Caspi A."/>
            <person name="Tesler G."/>
            <person name="Pevzner P.A."/>
            <person name="Haussler D."/>
            <person name="Roskin K.M."/>
            <person name="Baertsch R."/>
            <person name="Clawson H."/>
            <person name="Furey T.S."/>
            <person name="Hinrichs A.S."/>
            <person name="Karolchik D."/>
            <person name="Kent W.J."/>
            <person name="Rosenbloom K.R."/>
            <person name="Trumbower H."/>
            <person name="Weirauch M."/>
            <person name="Cooper D.N."/>
            <person name="Stenson P.D."/>
            <person name="Ma B."/>
            <person name="Brent M."/>
            <person name="Arumugam M."/>
            <person name="Shteynberg D."/>
            <person name="Copley R.R."/>
            <person name="Taylor M.S."/>
            <person name="Riethman H."/>
            <person name="Mudunuri U."/>
            <person name="Peterson J."/>
            <person name="Guyer M."/>
            <person name="Felsenfeld A."/>
            <person name="Old S."/>
            <person name="Mockrin S."/>
            <person name="Collins F.S."/>
        </authorList>
    </citation>
    <scope>NUCLEOTIDE SEQUENCE [LARGE SCALE GENOMIC DNA]</scope>
    <source>
        <strain>Brown Norway</strain>
    </source>
</reference>
<evidence type="ECO:0000250" key="1">
    <source>
        <dbReference type="UniProtKB" id="Q8R4B8"/>
    </source>
</evidence>
<evidence type="ECO:0000250" key="2">
    <source>
        <dbReference type="UniProtKB" id="Q96P20"/>
    </source>
</evidence>
<evidence type="ECO:0000255" key="3"/>
<evidence type="ECO:0000255" key="4">
    <source>
        <dbReference type="PROSITE-ProRule" id="PRU00061"/>
    </source>
</evidence>
<evidence type="ECO:0000255" key="5">
    <source>
        <dbReference type="PROSITE-ProRule" id="PRU00136"/>
    </source>
</evidence>
<evidence type="ECO:0000305" key="6"/>
<evidence type="ECO:0000312" key="7">
    <source>
        <dbReference type="RGD" id="1308314"/>
    </source>
</evidence>
<name>NLRP3_RAT</name>
<protein>
    <recommendedName>
        <fullName evidence="6">NACHT, LRR and PYD domains-containing protein 3</fullName>
        <ecNumber evidence="2">3.6.4.-</ecNumber>
    </recommendedName>
</protein>
<comment type="function">
    <text evidence="1 2">Sensor component of the NLRP3 inflammasome, which mediates inflammasome activation in response to defects in membrane integrity, leading to secretion of inflammatory cytokines IL1B and IL18 and pyroptosis. In response to pathogens and other damage-associated signals that affect the integrity of membranes, initiates the formation of the inflammasome polymeric complex composed of NLRP3, CASP1 and PYCARD/ASC. Recruitment of pro-caspase-1 (proCASP1) to the NLRP3 inflammasome promotes caspase-1 (CASP1) activation, which subsequently cleaves and activates inflammatory cytokines IL1B and IL18 and gasdermin-D (GSDMD), promoting cytokine secretion and pyroptosis. Activation of NLRP3 inflammasome is also required for HMGB1 secretion; stimulating inflammatory responses (By similarity). Under resting conditions, ADP-bound NLRP3 is autoinhibited (By similarity). NLRP3 activation stimuli include extracellular ATP, nigericin, reactive oxygen species, crystals of monosodium urate or cholesterol, amyloid-beta fibers, environmental or industrial particles and nanoparticles, such as asbestos, silica, aluminum salts, cytosolic dsRNA, etc. Almost all stimuli trigger intracellular K(+) efflux (By similarity). These stimuli lead to membrane perturbation and activation of NLRP3 (By similarity). Upon activation, NLRP3 is transported to microtubule organizing center (MTOC), where it is unlocked by NEK7, leading to its relocalization to dispersed trans-Golgi network (dTGN) vesicle membranes and formation of an active inflammasome complex. Associates with dTGN vesicle membranes by binding to phosphatidylinositol 4-phosphate (PtdIns4P). Shows ATPase activity (By similarity).</text>
</comment>
<comment type="function">
    <text evidence="1">Independently of inflammasome activation, regulates the differentiation of T helper 2 (Th2) cells and has a role in Th2 cell-dependent asthma and tumor growth. During Th2 differentiation, required for optimal IRF4 binding to IL4 promoter and for IRF4-dependent IL4 transcription. Binds to the consensus DNA sequence 5'-GRRGGNRGAG-3'. May also participate in the transcription of IL5, IL13, GATA3, CCR3, CCR4 and MAF.</text>
</comment>
<comment type="catalytic activity">
    <reaction evidence="1">
        <text>ATP + H2O = ADP + phosphate + H(+)</text>
        <dbReference type="Rhea" id="RHEA:13065"/>
        <dbReference type="ChEBI" id="CHEBI:15377"/>
        <dbReference type="ChEBI" id="CHEBI:15378"/>
        <dbReference type="ChEBI" id="CHEBI:30616"/>
        <dbReference type="ChEBI" id="CHEBI:43474"/>
        <dbReference type="ChEBI" id="CHEBI:456216"/>
    </reaction>
    <physiologicalReaction direction="left-to-right" evidence="1">
        <dbReference type="Rhea" id="RHEA:13066"/>
    </physiologicalReaction>
</comment>
<comment type="activity regulation">
    <text evidence="1 2">Under resting conditions, NLRP3 binds ADP and is autoinhibited (By similarity). Inactive NLRP3 forms homodecameric double-ring cages that hide pyrin domains within NACHT-LRR rings to avoid premature activation. NLRP3 activation stimuli include extracellular ATP, nigericin, reactive oxygen species, crystals of monosodium urate or cholesterol, amyloid-beta fibers, environmental or industrial particles and nanoparticles, such as asbestos, silica, aluminum salts, cytosolic dsRNA, etc. Almost all stimuli trigger intracellular K(+) efflux. These stimuli lead to membrane perturbations that induce activation of NLRP3. Upon activation, NLRP3 is transported to microtubule organizing center (MTOC), where it is unlocked by NEK7, leading to its relocalization to dispersed trans-Golgi network (dTGN) vesicle membranes and recruitment of PYCARD/ASC for the formation of an active inflammasome complex. NEK7-activated NLRP3 forms a disk-shaped inflammasome. NLRP3 and PYCARD/ASC interact via their respective pyrin domains; interaction initiates speck formation (nucleation) which greatly enhances further addition of soluble PYCARD/ASC molecules to the speck in a prion-like polymerization process (By similarity). Clustered PYCARD/ASC nucleates the formation of CASP1 filaments through the interaction of their respective CARD domains, acting as a platform for CASP1 polymerization and activation. Active CASP1 then processes IL1B and IL18 precursors, leading to the release of mature cytokines in the extracellular milieu and inflammatory response (By similarity). NLRP3 inflammasome assembly is inhibited by IRGM, which impedes NLRP3 oligomerization (By similarity). NLRP3 inflammasome is inhibited by cyclic AMP (cAMP), which directly binds NLRP3; inhibition is relieved by calcium-sensing receptor CASR, which inhibits production of cAMP (By similarity). Specifically inhibited by sulfonylurea MCC950 (also named CP-456,773, CRID3), a potent and specific small-molecule inhibitor of the NLRP3 inflammasome that acts by preventing ATP hydrolysis (By similarity).</text>
</comment>
<comment type="subunit">
    <text evidence="1 2">Sensor component of NLRP3 inflammasomes; inflammasomes are supramolecular complexes that assemble in the cytosol in response to pathogens and other damage-associated signals and play critical roles in innate immunity and inflammation. The core of NLRP3 inflammasomes consists of a signal sensor component (NLRP3), an adapter (PYCARD/ASC), which recruits an effector pro-inflammatory caspase (CASP1 and, possibly, CASP4 and CASP5). Homodecamer; inactive NLRP3 forms homodecameric double-ring cages that hide pyrin domains within NACHT-LRR rings to avoid premature activation. Interacts (via pyrin domain) with PYCARD/ASC (via pyrin domain); interaction is direct. Interacts (via LRR repeat domain) with NEK7 (via N-terminus); the interaction is required for the formation of the complex NLRP3:PYCARD, oligomerization of PYCARD/ASC and activation of CASP1 (By similarity). Interacts (via LRR repeat domain) with NR4A1/Nur77 (via N-terminus); the interaction is direct, requires activation of NR4A1 by its ligands NBRE-containing dsDNA and lipopolysaccharide, and stimulates the association of NLRP3 with NEK7 for non-canonical NLRP3 inflammasome activation (By similarity). Interacts with CARD8; leading to inhibit formation of the NLRP3 inflammasome. Interacts with MEFV; this interaction targets NLRP3 to degradation by autophagy, hence preventing excessive IL1B- and IL18-mediated inflammation (By similarity). Interacts with EIF2AK2/PKR; this interaction requires EIF2AK2 activity, is accompanied by EIF2AK2 autophosphorylation and promotes inflammasome assembly in response to specific stimuli (By similarity). Interacts with GBP5 (via DAPIN domain); this interaction promotes inflammasome assembly in response to microbial and soluble, but not crystalline, agents. Interacts with PML (isoform PML-1) (via the leucine-rich repeat (LRR) domain); PML-mediated increase in NLRP3 inflammasome activation does not depend upon this interaction. Interacts (via NACHT domain) with DHX33 (via DEAH box); NLRP3 activation in presence of cytosolic dsRNA is mediated by DHX33. Interacts (via NACHT and LRR domains) with ARRB2; this interaction is direct and inducible by polyunsaturated fatty acids (PUFAs). Interacts (via NACHT domain) with DDX3X under both LPS-primed and inflammasome-activating conditions. Interacts with IRF4 (via the LRR domain); this interaction is direct and is required for optimal IRF4 binding to IL4 promoter and efficient IL4 transactivation during differentiation of Th2 helper T-cells. Interacts with MAVS; promoting localization to mitochondria and activation of the NLRP3 inflammasome. Interacts with MARK4; promoting localization of NLRP3 to the microtubule organizing center (MTOC) (By similarity). Interacts with TRIM50; this interaction also promotes NLRP3 oligomerization and subsequent inflammasome activation (By similarity). Interacts with IRGM; preventing NLRP3 inflammasome assembly and promoting NLRP3 degradation (By similarity). Interacts (via NACHT and LLR domains) with ABHD8; this interaction is enhanced in the presence of NLRP3 inflammasome inducers, such as ATP, nigericin, silica, or alum. Interaction with ABHD8 leads the recruitment of ZDHHC12, hence facilitating NLRP3 palmitoylation and degradation by the chaperone-mediated autophagy pathway (CMA), therefore attenuating NLRP3 inflammasome activation (By similarity).</text>
</comment>
<comment type="subcellular location">
    <subcellularLocation>
        <location evidence="1">Cytoplasm</location>
        <location evidence="1">Cytosol</location>
    </subcellularLocation>
    <subcellularLocation>
        <location evidence="1">Inflammasome</location>
    </subcellularLocation>
    <subcellularLocation>
        <location evidence="1">Cytoplasm</location>
        <location evidence="1">Cytoskeleton</location>
        <location evidence="1">Microtubule organizing center</location>
    </subcellularLocation>
    <subcellularLocation>
        <location evidence="1">Golgi apparatus membrane</location>
    </subcellularLocation>
    <subcellularLocation>
        <location evidence="1">Endoplasmic reticulum</location>
    </subcellularLocation>
    <subcellularLocation>
        <location evidence="1">Mitochondrion</location>
    </subcellularLocation>
    <subcellularLocation>
        <location evidence="1">Secreted</location>
    </subcellularLocation>
    <subcellularLocation>
        <location evidence="1">Nucleus</location>
    </subcellularLocation>
    <text evidence="1">In macrophages, under resting conditions, mainly located in the cytosol and on membranes of various organelles, such as endoplasmic reticulum, mitochondria and Golgi: forms an inactive double-ring cage that is primarily localized on membranes. Upon activation, NLRP3 is transported to microtubule organizing center (MTOC), where it is unlocked by NEK7, leading to its relocalization to dispersed trans-Golgi network (dTGN) vesicle membranes for the formation of an active inflammasome complex. Recruited to dTGN vesicle membranes by binding to phosphatidylinositol 4-phosphate (PtdIns4P). After the induction of pyroptosis, inflammasome specks are released into the extracellular space where they can further promote IL1B processing and where they can be engulfed by macrophages. Phagocytosis induces lysosomal damage and inflammasome activation in the recipient cells. In the Th2 subset of CD4(+) helper T-cells, mainly located in the nucleus. Nuclear localization depends upon KPNA2. In the Th1 subset of CD4(+) helper T-cells, mainly cytoplasmic.</text>
</comment>
<comment type="domain">
    <text evidence="2">The pyrin domain (also called DAPIN domain or PYD) is involved in PYCARD/ASC-binding.</text>
</comment>
<comment type="domain">
    <text evidence="2">The FISNA domain is a critical mediator of NLRP3 conformational during NLRP3 activation. It becomes ordered in its key regions during activation to stabilize the active NACHT conformation and mediate most interactions in the NLRP3 disk.</text>
</comment>
<comment type="domain">
    <text evidence="1">The LRR domain mediates the interaction with IRF4, PML, NEK7 and NR4A1/Nur77.</text>
</comment>
<comment type="domain">
    <text evidence="2">The KFERQ-like motifs mediate binding to HSPA8/HSC70 following NLRP3 paylmitoylation by ZDHHC12.</text>
</comment>
<comment type="PTM">
    <text evidence="1 2">Phosphorylation by MAPK8/JNK1 increases inflammasome activation by promoting deubiquitination by BRCC3 and NLRP3 homooligomerization. Phosphorylation at Ser-805 by CSNK1A1 prevents inflammasome activation by preventing NEK7 recruitment. Phosphorylation at Ser-5 in the pyrin domain inhibits homomultimerization of NLRP3 and activation of the NLRP3 inflammasome: dephosphorylation by protein phosphatase 2A (PP2A) promotes assembly of the NLRP3 inflammasome. Phosphorylation at Ser-293 by PKD/PRKD1 promotes NLRP3 inflammasome assembly (By similarity). Phosphorylation by ERK1/MAPK3 promotes NLRP3 inflammasome assembly (By similarity). Phosphorylation by BTK (at Tyr-134, Tyr-138 and Tyr-166) in the region that mediates binding to phosphatidylinositol phosphate, promotes relocalization of NLRP3 and assembly of the NLRP3 inflammasome. Phosphorylation at Tyr-860 inhibits NLRP3 inflammasome assembly: dephosphorylation by PTPN22 promotes inflammasome activation (By similarity). Phosphorylated by LATS1 and LATS2 at Ser-263 following palmitoylation by ZDHHC1, promoting its relocalization to the microtubule organizing center (MTOC), where NLRP3 is activated by NEK7, leading to inflammasome assembly and activation (By similarity).</text>
</comment>
<comment type="PTM">
    <text evidence="1 2">Ubiquitinated; undergoes both 'Lys-48'- and 'Lys-63'-linked polyubiquitination. Ubiquitination does not lead to degradation, but inhibits inflammasome activation. Deubiquitination is catalyzed by BRCC3 and associated with NLRP3 activation and inflammasome assembly. This process can be induced by the activation of Toll-like receptors (by LPS), through a non-transcriptional pathway dependent on the mitochondrial production of reactive oxygen species, and by ATP. Ubiquitinated by TRIM31 via 'Lys-48'-linked ubiquitination, leading to its degradation by the proteasome (By similarity). Ubiquitinated at Lys-689 by the SCF(FBXL2) complex, leading to its degradation by the proteasome (By similarity). Ubiquitinated by TRIM35 via 'lys-48' and 'Lys-63'-linked ubiquitination leading to inhibition of NLRP3 inflammasome activation (By similarity). Undergoes 'Lys-27'-linked polyubiquitination by MARCHF5, leading to NLRP3-NEK7 complex formation and NLRP3 oligomerization (By similarity).</text>
</comment>
<comment type="PTM">
    <text evidence="2">The disulfide bond in the pyrin domain might play a role in reactive oxygen species-mediated activation.</text>
</comment>
<comment type="PTM">
    <text evidence="2">Palmitoylation by ZDHHC12 promotes NLRP3 degradation by the chaperone-mediated autophagy pathway (CMA) and therefore limits NLRP3 inflammasome activation. Interaction with ZDHHC12, and hence NLRP3 palmitoylation, is greatly enhanced by ABHD8 (By similarity). Following palmitoylation, HSPA8/HSC70 recognizes and binds the KFERQ-like motifs on NLRP3 and promotes NLRP3 recruitment to lysosomes, where it is degraded via the chaperone-mediated autophagy pathway in a LAMP2-dependent process. Palmitoylation at Cys-836 and Cys-837 by ZDHHC5 enhances its binding to NEK7 leading to inflammasome assembly and activation. Palmitoylation at Cys-128 and Cys-957 by ZDHHC1 facilitates phosphorylation at Ser-263 by LATS1 and LATS2, promoting its relocalization to the microtubule organizing center (MTOC), where NLRP3 is activated by NEK7, leading to inflammasome assembly and activation. Depalmitoylated by ABHD17A.</text>
</comment>
<comment type="PTM">
    <text evidence="2">Degraded via selective autophagy following interaction with IRGM. IRGM promotes NLRP3 recruitment to autophagosome membranes, promoting its SQSTM1/p62-dependent autophagy-dependent degradation.</text>
</comment>
<comment type="similarity">
    <text evidence="6">Belongs to the NLRP family.</text>
</comment>
<feature type="chain" id="PRO_0000439878" description="NACHT, LRR and PYD domains-containing protein 3">
    <location>
        <begin position="1"/>
        <end position="1035"/>
    </location>
</feature>
<feature type="domain" description="Pyrin" evidence="4">
    <location>
        <begin position="1"/>
        <end position="93"/>
    </location>
</feature>
<feature type="domain" description="FISNA" evidence="3">
    <location>
        <begin position="138"/>
        <end position="208"/>
    </location>
</feature>
<feature type="domain" description="NACHT" evidence="5">
    <location>
        <begin position="218"/>
        <end position="534"/>
    </location>
</feature>
<feature type="repeat" description="LRR 1" evidence="1">
    <location>
        <begin position="741"/>
        <end position="761"/>
    </location>
</feature>
<feature type="repeat" description="LRR 2" evidence="1">
    <location>
        <begin position="770"/>
        <end position="791"/>
    </location>
</feature>
<feature type="repeat" description="LRR 3" evidence="1">
    <location>
        <begin position="798"/>
        <end position="818"/>
    </location>
</feature>
<feature type="repeat" description="LRR 4" evidence="1">
    <location>
        <begin position="827"/>
        <end position="848"/>
    </location>
</feature>
<feature type="repeat" description="LRR 5" evidence="1">
    <location>
        <begin position="855"/>
        <end position="875"/>
    </location>
</feature>
<feature type="repeat" description="LRR 6" evidence="1">
    <location>
        <begin position="884"/>
        <end position="905"/>
    </location>
</feature>
<feature type="repeat" description="LRR 7" evidence="1">
    <location>
        <begin position="912"/>
        <end position="932"/>
    </location>
</feature>
<feature type="repeat" description="LRR 8" evidence="1">
    <location>
        <begin position="941"/>
        <end position="962"/>
    </location>
</feature>
<feature type="repeat" description="LRR 9" evidence="1">
    <location>
        <begin position="969"/>
        <end position="990"/>
    </location>
</feature>
<feature type="region of interest" description="Required for binding to phosphatidylinositol 4-phosphate (PtdIns4P)" evidence="1">
    <location>
        <begin position="129"/>
        <end position="132"/>
    </location>
</feature>
<feature type="short sequence motif" description="KFERQ-like motif 1" evidence="2">
    <location>
        <begin position="353"/>
        <end position="357"/>
    </location>
</feature>
<feature type="short sequence motif" description="KFERQ-like motif 2" evidence="2">
    <location>
        <begin position="603"/>
        <end position="607"/>
    </location>
</feature>
<feature type="short sequence motif" description="KFERQ-like motif 3" evidence="2">
    <location>
        <begin position="797"/>
        <end position="801"/>
    </location>
</feature>
<feature type="short sequence motif" description="KFERQ-like motif 4" evidence="2">
    <location>
        <begin position="990"/>
        <end position="994"/>
    </location>
</feature>
<feature type="binding site" evidence="2">
    <location>
        <position position="167"/>
    </location>
    <ligand>
        <name>ATP</name>
        <dbReference type="ChEBI" id="CHEBI:30616"/>
    </ligand>
</feature>
<feature type="binding site" evidence="5">
    <location>
        <begin position="224"/>
        <end position="231"/>
    </location>
    <ligand>
        <name>ATP</name>
        <dbReference type="ChEBI" id="CHEBI:30616"/>
    </ligand>
</feature>
<feature type="binding site" evidence="2">
    <location>
        <position position="520"/>
    </location>
    <ligand>
        <name>ATP</name>
        <dbReference type="ChEBI" id="CHEBI:30616"/>
    </ligand>
</feature>
<feature type="modified residue" description="Phosphoserine" evidence="1">
    <location>
        <position position="5"/>
    </location>
</feature>
<feature type="modified residue" description="Phosphotyrosine" evidence="2">
    <location>
        <position position="13"/>
    </location>
</feature>
<feature type="modified residue" description="Phosphotyrosine" evidence="2">
    <location>
        <position position="134"/>
    </location>
</feature>
<feature type="modified residue" description="Phosphotyrosine" evidence="2">
    <location>
        <position position="138"/>
    </location>
</feature>
<feature type="modified residue" description="Phosphoserine" evidence="1">
    <location>
        <position position="159"/>
    </location>
</feature>
<feature type="modified residue" description="Phosphotyrosine" evidence="2">
    <location>
        <position position="166"/>
    </location>
</feature>
<feature type="modified residue" description="Phosphoserine" evidence="2">
    <location>
        <position position="199"/>
    </location>
</feature>
<feature type="modified residue" description="Phosphoserine" evidence="2">
    <location>
        <position position="263"/>
    </location>
</feature>
<feature type="modified residue" description="Phosphoserine" evidence="1">
    <location>
        <position position="293"/>
    </location>
</feature>
<feature type="modified residue" description="Phosphoserine" evidence="2">
    <location>
        <position position="332"/>
    </location>
</feature>
<feature type="modified residue" description="Phosphoserine" evidence="2">
    <location>
        <position position="727"/>
    </location>
</feature>
<feature type="modified residue" description="Phosphoserine" evidence="2">
    <location>
        <position position="734"/>
    </location>
</feature>
<feature type="modified residue" description="Phosphoserine" evidence="2">
    <location>
        <position position="805"/>
    </location>
</feature>
<feature type="modified residue" description="Phosphotyrosine" evidence="2">
    <location>
        <position position="860"/>
    </location>
</feature>
<feature type="modified residue" description="Phosphoserine" evidence="2">
    <location>
        <position position="1034"/>
    </location>
</feature>
<feature type="lipid moiety-binding region" description="S-palmitoyl cysteine" evidence="2">
    <location>
        <position position="128"/>
    </location>
</feature>
<feature type="lipid moiety-binding region" description="S-palmitoyl cysteine" evidence="2">
    <location>
        <position position="836"/>
    </location>
</feature>
<feature type="lipid moiety-binding region" description="S-palmitoyl cysteine" evidence="2">
    <location>
        <position position="837"/>
    </location>
</feature>
<feature type="lipid moiety-binding region" description="S-palmitoyl cysteine" evidence="2">
    <location>
        <position position="843"/>
    </location>
</feature>
<feature type="lipid moiety-binding region" description="S-palmitoyl cysteine" evidence="2">
    <location>
        <position position="957"/>
    </location>
</feature>
<feature type="disulfide bond" description="Redox-active" evidence="2">
    <location>
        <begin position="8"/>
        <end position="106"/>
    </location>
</feature>
<feature type="cross-link" description="Glycyl lysine isopeptide (Lys-Gly) (interchain with G-Cter in ubiquitin)" evidence="2">
    <location>
        <position position="322"/>
    </location>
</feature>
<feature type="cross-link" description="Glycyl lysine isopeptide (Lys-Gly) (interchain with G-Cter in ubiquitin)" evidence="2">
    <location>
        <position position="428"/>
    </location>
</feature>
<feature type="cross-link" description="Glycyl lysine isopeptide (Lys-Gly) (interchain with G-Cter in ubiquitin)" evidence="2">
    <location>
        <position position="689"/>
    </location>
</feature>
<feature type="cross-link" description="Glycyl lysine isopeptide (Lys-Gly) (interchain with G-Cter in ubiquitin)" evidence="2">
    <location>
        <position position="877"/>
    </location>
</feature>
<feature type="cross-link" description="Glycyl lysine isopeptide (Lys-Gly) (interchain with G-Cter in ubiquitin)" evidence="2">
    <location>
        <position position="972"/>
    </location>
</feature>
<dbReference type="EC" id="3.6.4.-" evidence="2"/>
<dbReference type="EMBL" id="AC123316">
    <property type="status" value="NOT_ANNOTATED_CDS"/>
    <property type="molecule type" value="Genomic_DNA"/>
</dbReference>
<dbReference type="RefSeq" id="NP_001178571.1">
    <property type="nucleotide sequence ID" value="NM_001191642.1"/>
</dbReference>
<dbReference type="RefSeq" id="XP_006246515.1">
    <property type="nucleotide sequence ID" value="XM_006246453.5"/>
</dbReference>
<dbReference type="RefSeq" id="XP_017452567.1">
    <property type="nucleotide sequence ID" value="XM_017597078.1"/>
</dbReference>
<dbReference type="RefSeq" id="XP_038941322.1">
    <property type="nucleotide sequence ID" value="XM_039085394.2"/>
</dbReference>
<dbReference type="RefSeq" id="XP_038941323.1">
    <property type="nucleotide sequence ID" value="XM_039085395.2"/>
</dbReference>
<dbReference type="RefSeq" id="XP_063124678.1">
    <property type="nucleotide sequence ID" value="XM_063268608.1"/>
</dbReference>
<dbReference type="SMR" id="D4A523"/>
<dbReference type="FunCoup" id="D4A523">
    <property type="interactions" value="393"/>
</dbReference>
<dbReference type="STRING" id="10116.ENSRNOP00000004280"/>
<dbReference type="PhosphoSitePlus" id="D4A523"/>
<dbReference type="PaxDb" id="10116-ENSRNOP00000004280"/>
<dbReference type="PeptideAtlas" id="D4A523"/>
<dbReference type="Ensembl" id="ENSRNOT00000004280.6">
    <property type="protein sequence ID" value="ENSRNOP00000004280.3"/>
    <property type="gene ID" value="ENSRNOG00000003170.7"/>
</dbReference>
<dbReference type="GeneID" id="287362"/>
<dbReference type="KEGG" id="rno:287362"/>
<dbReference type="UCSC" id="RGD:1308314">
    <property type="organism name" value="rat"/>
</dbReference>
<dbReference type="AGR" id="RGD:1308314"/>
<dbReference type="CTD" id="114548"/>
<dbReference type="RGD" id="1308314">
    <property type="gene designation" value="Nlrp3"/>
</dbReference>
<dbReference type="eggNOG" id="ENOG502SBIG">
    <property type="taxonomic scope" value="Eukaryota"/>
</dbReference>
<dbReference type="GeneTree" id="ENSGT00940000162415"/>
<dbReference type="HOGENOM" id="CLU_002274_2_0_1"/>
<dbReference type="InParanoid" id="D4A523"/>
<dbReference type="OMA" id="HLFCNLQ"/>
<dbReference type="Reactome" id="R-RNO-5689901">
    <property type="pathway name" value="Metalloprotease DUBs"/>
</dbReference>
<dbReference type="Reactome" id="R-RNO-844456">
    <property type="pathway name" value="The NLRP3 inflammasome"/>
</dbReference>
<dbReference type="PRO" id="PR:D4A523"/>
<dbReference type="Proteomes" id="UP000002494">
    <property type="component" value="Chromosome 10"/>
</dbReference>
<dbReference type="Bgee" id="ENSRNOG00000003170">
    <property type="expression patterns" value="Expressed in spleen and 18 other cell types or tissues"/>
</dbReference>
<dbReference type="ExpressionAtlas" id="D4A523">
    <property type="expression patterns" value="baseline and differential"/>
</dbReference>
<dbReference type="GO" id="GO:0061702">
    <property type="term" value="C:canonical inflammasome complex"/>
    <property type="evidence" value="ECO:0000266"/>
    <property type="project" value="RGD"/>
</dbReference>
<dbReference type="GO" id="GO:0005737">
    <property type="term" value="C:cytoplasm"/>
    <property type="evidence" value="ECO:0000266"/>
    <property type="project" value="RGD"/>
</dbReference>
<dbReference type="GO" id="GO:0005829">
    <property type="term" value="C:cytosol"/>
    <property type="evidence" value="ECO:0000266"/>
    <property type="project" value="RGD"/>
</dbReference>
<dbReference type="GO" id="GO:0005783">
    <property type="term" value="C:endoplasmic reticulum"/>
    <property type="evidence" value="ECO:0007669"/>
    <property type="project" value="UniProtKB-SubCell"/>
</dbReference>
<dbReference type="GO" id="GO:0005576">
    <property type="term" value="C:extracellular region"/>
    <property type="evidence" value="ECO:0007669"/>
    <property type="project" value="UniProtKB-SubCell"/>
</dbReference>
<dbReference type="GO" id="GO:0000139">
    <property type="term" value="C:Golgi membrane"/>
    <property type="evidence" value="ECO:0000266"/>
    <property type="project" value="RGD"/>
</dbReference>
<dbReference type="GO" id="GO:0031021">
    <property type="term" value="C:interphase microtubule organizing center"/>
    <property type="evidence" value="ECO:0000250"/>
    <property type="project" value="UniProtKB"/>
</dbReference>
<dbReference type="GO" id="GO:0016020">
    <property type="term" value="C:membrane"/>
    <property type="evidence" value="ECO:0000250"/>
    <property type="project" value="UniProtKB"/>
</dbReference>
<dbReference type="GO" id="GO:0005815">
    <property type="term" value="C:microtubule organizing center"/>
    <property type="evidence" value="ECO:0000266"/>
    <property type="project" value="RGD"/>
</dbReference>
<dbReference type="GO" id="GO:0005739">
    <property type="term" value="C:mitochondrion"/>
    <property type="evidence" value="ECO:0000266"/>
    <property type="project" value="RGD"/>
</dbReference>
<dbReference type="GO" id="GO:0072559">
    <property type="term" value="C:NLRP3 inflammasome complex"/>
    <property type="evidence" value="ECO:0000266"/>
    <property type="project" value="RGD"/>
</dbReference>
<dbReference type="GO" id="GO:0005634">
    <property type="term" value="C:nucleus"/>
    <property type="evidence" value="ECO:0000266"/>
    <property type="project" value="RGD"/>
</dbReference>
<dbReference type="GO" id="GO:0043531">
    <property type="term" value="F:ADP binding"/>
    <property type="evidence" value="ECO:0000250"/>
    <property type="project" value="UniProtKB"/>
</dbReference>
<dbReference type="GO" id="GO:0005524">
    <property type="term" value="F:ATP binding"/>
    <property type="evidence" value="ECO:0000250"/>
    <property type="project" value="UniProtKB"/>
</dbReference>
<dbReference type="GO" id="GO:0016887">
    <property type="term" value="F:ATP hydrolysis activity"/>
    <property type="evidence" value="ECO:0000250"/>
    <property type="project" value="UniProtKB"/>
</dbReference>
<dbReference type="GO" id="GO:0140608">
    <property type="term" value="F:cysteine-type endopeptidase activator activity"/>
    <property type="evidence" value="ECO:0000266"/>
    <property type="project" value="RGD"/>
</dbReference>
<dbReference type="GO" id="GO:0140297">
    <property type="term" value="F:DNA-binding transcription factor binding"/>
    <property type="evidence" value="ECO:0000266"/>
    <property type="project" value="RGD"/>
</dbReference>
<dbReference type="GO" id="GO:0042802">
    <property type="term" value="F:identical protein binding"/>
    <property type="evidence" value="ECO:0000266"/>
    <property type="project" value="RGD"/>
</dbReference>
<dbReference type="GO" id="GO:0060090">
    <property type="term" value="F:molecular adaptor activity"/>
    <property type="evidence" value="ECO:0000266"/>
    <property type="project" value="RGD"/>
</dbReference>
<dbReference type="GO" id="GO:0140693">
    <property type="term" value="F:molecular condensate scaffold activity"/>
    <property type="evidence" value="ECO:0000266"/>
    <property type="project" value="RGD"/>
</dbReference>
<dbReference type="GO" id="GO:0140299">
    <property type="term" value="F:molecular sensor activity"/>
    <property type="evidence" value="ECO:0000250"/>
    <property type="project" value="UniProtKB"/>
</dbReference>
<dbReference type="GO" id="GO:1901981">
    <property type="term" value="F:phosphatidylinositol phosphate binding"/>
    <property type="evidence" value="ECO:0000250"/>
    <property type="project" value="UniProtKB"/>
</dbReference>
<dbReference type="GO" id="GO:0070273">
    <property type="term" value="F:phosphatidylinositol-4-phosphate binding"/>
    <property type="evidence" value="ECO:0000250"/>
    <property type="project" value="UniProtKB"/>
</dbReference>
<dbReference type="GO" id="GO:0030674">
    <property type="term" value="F:protein-macromolecule adaptor activity"/>
    <property type="evidence" value="ECO:0000266"/>
    <property type="project" value="RGD"/>
</dbReference>
<dbReference type="GO" id="GO:0043565">
    <property type="term" value="F:sequence-specific DNA binding"/>
    <property type="evidence" value="ECO:0000266"/>
    <property type="project" value="RGD"/>
</dbReference>
<dbReference type="GO" id="GO:0035591">
    <property type="term" value="F:signaling adaptor activity"/>
    <property type="evidence" value="ECO:0000250"/>
    <property type="project" value="UniProtKB"/>
</dbReference>
<dbReference type="GO" id="GO:0002526">
    <property type="term" value="P:acute inflammatory response"/>
    <property type="evidence" value="ECO:0000266"/>
    <property type="project" value="RGD"/>
</dbReference>
<dbReference type="GO" id="GO:0071222">
    <property type="term" value="P:cellular response to lipopolysaccharide"/>
    <property type="evidence" value="ECO:0000266"/>
    <property type="project" value="RGD"/>
</dbReference>
<dbReference type="GO" id="GO:0071224">
    <property type="term" value="P:cellular response to peptidoglycan"/>
    <property type="evidence" value="ECO:0000266"/>
    <property type="project" value="RGD"/>
</dbReference>
<dbReference type="GO" id="GO:0098586">
    <property type="term" value="P:cellular response to virus"/>
    <property type="evidence" value="ECO:0000266"/>
    <property type="project" value="RGD"/>
</dbReference>
<dbReference type="GO" id="GO:0050830">
    <property type="term" value="P:defense response to Gram-positive bacterium"/>
    <property type="evidence" value="ECO:0000266"/>
    <property type="project" value="RGD"/>
</dbReference>
<dbReference type="GO" id="GO:0051607">
    <property type="term" value="P:defense response to virus"/>
    <property type="evidence" value="ECO:0000266"/>
    <property type="project" value="RGD"/>
</dbReference>
<dbReference type="GO" id="GO:0009595">
    <property type="term" value="P:detection of biotic stimulus"/>
    <property type="evidence" value="ECO:0000250"/>
    <property type="project" value="UniProtKB"/>
</dbReference>
<dbReference type="GO" id="GO:0006954">
    <property type="term" value="P:inflammatory response"/>
    <property type="evidence" value="ECO:0000250"/>
    <property type="project" value="UniProtKB"/>
</dbReference>
<dbReference type="GO" id="GO:0045087">
    <property type="term" value="P:innate immune response"/>
    <property type="evidence" value="ECO:0007669"/>
    <property type="project" value="UniProtKB-KW"/>
</dbReference>
<dbReference type="GO" id="GO:0002674">
    <property type="term" value="P:negative regulation of acute inflammatory response"/>
    <property type="evidence" value="ECO:0000266"/>
    <property type="project" value="RGD"/>
</dbReference>
<dbReference type="GO" id="GO:0050728">
    <property type="term" value="P:negative regulation of inflammatory response"/>
    <property type="evidence" value="ECO:0000266"/>
    <property type="project" value="RGD"/>
</dbReference>
<dbReference type="GO" id="GO:0032691">
    <property type="term" value="P:negative regulation of interleukin-1 beta production"/>
    <property type="evidence" value="ECO:0000266"/>
    <property type="project" value="RGD"/>
</dbReference>
<dbReference type="GO" id="GO:1901223">
    <property type="term" value="P:negative regulation of non-canonical NF-kappaB signal transduction"/>
    <property type="evidence" value="ECO:0000266"/>
    <property type="project" value="RGD"/>
</dbReference>
<dbReference type="GO" id="GO:0044546">
    <property type="term" value="P:NLRP3 inflammasome complex assembly"/>
    <property type="evidence" value="ECO:0000250"/>
    <property type="project" value="UniProtKB"/>
</dbReference>
<dbReference type="GO" id="GO:0002720">
    <property type="term" value="P:positive regulation of cytokine production involved in immune response"/>
    <property type="evidence" value="ECO:0000266"/>
    <property type="project" value="RGD"/>
</dbReference>
<dbReference type="GO" id="GO:0050729">
    <property type="term" value="P:positive regulation of inflammatory response"/>
    <property type="evidence" value="ECO:0000250"/>
    <property type="project" value="UniProtKB"/>
</dbReference>
<dbReference type="GO" id="GO:0032731">
    <property type="term" value="P:positive regulation of interleukin-1 beta production"/>
    <property type="evidence" value="ECO:0000250"/>
    <property type="project" value="UniProtKB"/>
</dbReference>
<dbReference type="GO" id="GO:0032736">
    <property type="term" value="P:positive regulation of interleukin-13 production"/>
    <property type="evidence" value="ECO:0000266"/>
    <property type="project" value="RGD"/>
</dbReference>
<dbReference type="GO" id="GO:0032753">
    <property type="term" value="P:positive regulation of interleukin-4 production"/>
    <property type="evidence" value="ECO:0000266"/>
    <property type="project" value="RGD"/>
</dbReference>
<dbReference type="GO" id="GO:0032754">
    <property type="term" value="P:positive regulation of interleukin-5 production"/>
    <property type="evidence" value="ECO:0000266"/>
    <property type="project" value="RGD"/>
</dbReference>
<dbReference type="GO" id="GO:1901224">
    <property type="term" value="P:positive regulation of non-canonical NF-kappaB signal transduction"/>
    <property type="evidence" value="ECO:0000266"/>
    <property type="project" value="RGD"/>
</dbReference>
<dbReference type="GO" id="GO:2000321">
    <property type="term" value="P:positive regulation of T-helper 17 cell differentiation"/>
    <property type="evidence" value="ECO:0000266"/>
    <property type="project" value="RGD"/>
</dbReference>
<dbReference type="GO" id="GO:2000553">
    <property type="term" value="P:positive regulation of T-helper 2 cell cytokine production"/>
    <property type="evidence" value="ECO:0000266"/>
    <property type="project" value="RGD"/>
</dbReference>
<dbReference type="GO" id="GO:0045630">
    <property type="term" value="P:positive regulation of T-helper 2 cell differentiation"/>
    <property type="evidence" value="ECO:0000266"/>
    <property type="project" value="RGD"/>
</dbReference>
<dbReference type="GO" id="GO:0045944">
    <property type="term" value="P:positive regulation of transcription by RNA polymerase II"/>
    <property type="evidence" value="ECO:0000266"/>
    <property type="project" value="RGD"/>
</dbReference>
<dbReference type="GO" id="GO:0002830">
    <property type="term" value="P:positive regulation of type 2 immune response"/>
    <property type="evidence" value="ECO:0000266"/>
    <property type="project" value="RGD"/>
</dbReference>
<dbReference type="GO" id="GO:0051260">
    <property type="term" value="P:protein homooligomerization"/>
    <property type="evidence" value="ECO:0000250"/>
    <property type="project" value="UniProtKB"/>
</dbReference>
<dbReference type="GO" id="GO:0051604">
    <property type="term" value="P:protein maturation"/>
    <property type="evidence" value="ECO:0000266"/>
    <property type="project" value="RGD"/>
</dbReference>
<dbReference type="GO" id="GO:0050727">
    <property type="term" value="P:regulation of inflammatory response"/>
    <property type="evidence" value="ECO:0000266"/>
    <property type="project" value="RGD"/>
</dbReference>
<dbReference type="GO" id="GO:0045471">
    <property type="term" value="P:response to ethanol"/>
    <property type="evidence" value="ECO:0000270"/>
    <property type="project" value="RGD"/>
</dbReference>
<dbReference type="CDD" id="cd00116">
    <property type="entry name" value="LRR_RI"/>
    <property type="match status" value="1"/>
</dbReference>
<dbReference type="CDD" id="cd08320">
    <property type="entry name" value="Pyrin_NALPs"/>
    <property type="match status" value="1"/>
</dbReference>
<dbReference type="FunFam" id="3.40.50.300:FF:000442">
    <property type="entry name" value="NACHT, LRR and PYD domains-containing protein 3"/>
    <property type="match status" value="1"/>
</dbReference>
<dbReference type="FunFam" id="3.80.10.10:FF:000360">
    <property type="entry name" value="NACHT, LRR and PYD domains-containing protein 3"/>
    <property type="match status" value="1"/>
</dbReference>
<dbReference type="Gene3D" id="1.10.533.10">
    <property type="entry name" value="Death Domain, Fas"/>
    <property type="match status" value="1"/>
</dbReference>
<dbReference type="Gene3D" id="3.40.50.300">
    <property type="entry name" value="P-loop containing nucleotide triphosphate hydrolases"/>
    <property type="match status" value="1"/>
</dbReference>
<dbReference type="Gene3D" id="3.80.10.10">
    <property type="entry name" value="Ribonuclease Inhibitor"/>
    <property type="match status" value="3"/>
</dbReference>
<dbReference type="InterPro" id="IPR004020">
    <property type="entry name" value="DAPIN"/>
</dbReference>
<dbReference type="InterPro" id="IPR011029">
    <property type="entry name" value="DEATH-like_dom_sf"/>
</dbReference>
<dbReference type="InterPro" id="IPR001611">
    <property type="entry name" value="Leu-rich_rpt"/>
</dbReference>
<dbReference type="InterPro" id="IPR032675">
    <property type="entry name" value="LRR_dom_sf"/>
</dbReference>
<dbReference type="InterPro" id="IPR029495">
    <property type="entry name" value="NACHT-assoc"/>
</dbReference>
<dbReference type="InterPro" id="IPR007111">
    <property type="entry name" value="NACHT_NTPase"/>
</dbReference>
<dbReference type="InterPro" id="IPR041267">
    <property type="entry name" value="NLRP_HD2"/>
</dbReference>
<dbReference type="InterPro" id="IPR050637">
    <property type="entry name" value="NLRP_innate_immun_reg"/>
</dbReference>
<dbReference type="InterPro" id="IPR041075">
    <property type="entry name" value="NOD1/2_WH"/>
</dbReference>
<dbReference type="InterPro" id="IPR027417">
    <property type="entry name" value="P-loop_NTPase"/>
</dbReference>
<dbReference type="PANTHER" id="PTHR45690">
    <property type="entry name" value="NACHT, LRR AND PYD DOMAINS-CONTAINING PROTEIN 12"/>
    <property type="match status" value="1"/>
</dbReference>
<dbReference type="PANTHER" id="PTHR45690:SF19">
    <property type="entry name" value="NACHT, LRR AND PYD DOMAINS-CONTAINING PROTEIN 3"/>
    <property type="match status" value="1"/>
</dbReference>
<dbReference type="Pfam" id="PF14484">
    <property type="entry name" value="FISNA"/>
    <property type="match status" value="1"/>
</dbReference>
<dbReference type="Pfam" id="PF13516">
    <property type="entry name" value="LRR_6"/>
    <property type="match status" value="5"/>
</dbReference>
<dbReference type="Pfam" id="PF05729">
    <property type="entry name" value="NACHT"/>
    <property type="match status" value="1"/>
</dbReference>
<dbReference type="Pfam" id="PF17776">
    <property type="entry name" value="NLRC4_HD2"/>
    <property type="match status" value="1"/>
</dbReference>
<dbReference type="Pfam" id="PF17779">
    <property type="entry name" value="NOD2_WH"/>
    <property type="match status" value="1"/>
</dbReference>
<dbReference type="Pfam" id="PF02758">
    <property type="entry name" value="PYRIN"/>
    <property type="match status" value="1"/>
</dbReference>
<dbReference type="SMART" id="SM01288">
    <property type="entry name" value="FISNA"/>
    <property type="match status" value="1"/>
</dbReference>
<dbReference type="SMART" id="SM00368">
    <property type="entry name" value="LRR_RI"/>
    <property type="match status" value="9"/>
</dbReference>
<dbReference type="SMART" id="SM01289">
    <property type="entry name" value="PYRIN"/>
    <property type="match status" value="1"/>
</dbReference>
<dbReference type="SUPFAM" id="SSF47986">
    <property type="entry name" value="DEATH domain"/>
    <property type="match status" value="1"/>
</dbReference>
<dbReference type="SUPFAM" id="SSF52540">
    <property type="entry name" value="P-loop containing nucleoside triphosphate hydrolases"/>
    <property type="match status" value="1"/>
</dbReference>
<dbReference type="SUPFAM" id="SSF52047">
    <property type="entry name" value="RNI-like"/>
    <property type="match status" value="1"/>
</dbReference>
<dbReference type="PROSITE" id="PS50824">
    <property type="entry name" value="DAPIN"/>
    <property type="match status" value="1"/>
</dbReference>
<dbReference type="PROSITE" id="PS51450">
    <property type="entry name" value="LRR"/>
    <property type="match status" value="5"/>
</dbReference>
<dbReference type="PROSITE" id="PS50837">
    <property type="entry name" value="NACHT"/>
    <property type="match status" value="1"/>
</dbReference>
<proteinExistence type="inferred from homology"/>